<sequence>MTIETQEEPPEIKVYLPRVGITNLKSVAKIEWKGRIYTFIPTFEVAIDLPEEKKGIHMSRLVESITETMSEAVEEEVKKVHTSLEDLALCIIRRIEKKHSHKRAEVWIKSTLILERQTPASGKTSYEPYDVEVGVIKNSDGSIKKVLKVKVIGNTACPHAMANNQGKTHIQRAIAELEIETHFNEDIALEDMIEVVESSFSSPTYTLLKTPDENAVVRRMYENPKFVEDVAREIVYKARNRFKGKIHVKVISHESIHKHDVIAEVWA</sequence>
<feature type="chain" id="PRO_0000147750" description="GTP cyclohydrolase MptA">
    <location>
        <begin position="1"/>
        <end position="267"/>
    </location>
</feature>
<feature type="site" description="May be catalytically important" evidence="1">
    <location>
        <position position="157"/>
    </location>
</feature>
<reference key="1">
    <citation type="journal article" date="1999" name="Genetics">
        <title>Divergence of the hyperthermophilic archaea Pyrococcus furiosus and P. horikoshii inferred from complete genomic sequences.</title>
        <authorList>
            <person name="Maeder D.L."/>
            <person name="Weiss R.B."/>
            <person name="Dunn D.M."/>
            <person name="Cherry J.L."/>
            <person name="Gonzalez J.M."/>
            <person name="DiRuggiero J."/>
            <person name="Robb F.T."/>
        </authorList>
    </citation>
    <scope>NUCLEOTIDE SEQUENCE [LARGE SCALE GENOMIC DNA]</scope>
    <source>
        <strain>ATCC 43587 / DSM 3638 / JCM 8422 / Vc1</strain>
    </source>
</reference>
<accession>Q8TZZ2</accession>
<gene>
    <name evidence="1" type="primary">mptA</name>
    <name type="ordered locus">PF1832</name>
</gene>
<protein>
    <recommendedName>
        <fullName evidence="1">GTP cyclohydrolase MptA</fullName>
        <ecNumber evidence="1">3.5.4.39</ecNumber>
    </recommendedName>
    <alternativeName>
        <fullName evidence="1">GTP cyclohydrolase IV</fullName>
    </alternativeName>
</protein>
<organism>
    <name type="scientific">Pyrococcus furiosus (strain ATCC 43587 / DSM 3638 / JCM 8422 / Vc1)</name>
    <dbReference type="NCBI Taxonomy" id="186497"/>
    <lineage>
        <taxon>Archaea</taxon>
        <taxon>Methanobacteriati</taxon>
        <taxon>Methanobacteriota</taxon>
        <taxon>Thermococci</taxon>
        <taxon>Thermococcales</taxon>
        <taxon>Thermococcaceae</taxon>
        <taxon>Pyrococcus</taxon>
    </lineage>
</organism>
<comment type="function">
    <text evidence="1">Converts GTP to 7,8-dihydro-D-neopterin 2',3'-cyclic phosphate, the first intermediate in the biosynthesis of coenzyme methanopterin.</text>
</comment>
<comment type="catalytic activity">
    <reaction evidence="1">
        <text>GTP + H2O = 7,8-dihydroneopterin 2',3'-cyclic phosphate + formate + diphosphate + H(+)</text>
        <dbReference type="Rhea" id="RHEA:25860"/>
        <dbReference type="ChEBI" id="CHEBI:15377"/>
        <dbReference type="ChEBI" id="CHEBI:15378"/>
        <dbReference type="ChEBI" id="CHEBI:15740"/>
        <dbReference type="ChEBI" id="CHEBI:33019"/>
        <dbReference type="ChEBI" id="CHEBI:37565"/>
        <dbReference type="ChEBI" id="CHEBI:58854"/>
        <dbReference type="EC" id="3.5.4.39"/>
    </reaction>
</comment>
<comment type="cofactor">
    <cofactor evidence="1">
        <name>Fe(2+)</name>
        <dbReference type="ChEBI" id="CHEBI:29033"/>
    </cofactor>
    <text evidence="1">Binds 1 Fe(2+) ion per subunit.</text>
</comment>
<comment type="pathway">
    <text evidence="1">Cofactor biosynthesis; 5,6,7,8-tetrahydromethanopterin biosynthesis.</text>
</comment>
<comment type="subunit">
    <text evidence="1">Homodimer.</text>
</comment>
<comment type="similarity">
    <text evidence="1">Belongs to the GTP cyclohydrolase IV family.</text>
</comment>
<proteinExistence type="inferred from homology"/>
<keyword id="KW-0378">Hydrolase</keyword>
<keyword id="KW-0408">Iron</keyword>
<keyword id="KW-0479">Metal-binding</keyword>
<keyword id="KW-1185">Reference proteome</keyword>
<name>MPTA_PYRFU</name>
<dbReference type="EC" id="3.5.4.39" evidence="1"/>
<dbReference type="EMBL" id="AE009950">
    <property type="protein sequence ID" value="AAL81956.1"/>
    <property type="molecule type" value="Genomic_DNA"/>
</dbReference>
<dbReference type="RefSeq" id="WP_011012972.1">
    <property type="nucleotide sequence ID" value="NZ_CP023154.1"/>
</dbReference>
<dbReference type="SMR" id="Q8TZZ2"/>
<dbReference type="STRING" id="186497.PF1832"/>
<dbReference type="PaxDb" id="186497-PF1832"/>
<dbReference type="KEGG" id="pfu:PF1832"/>
<dbReference type="PATRIC" id="fig|186497.12.peg.1903"/>
<dbReference type="eggNOG" id="arCOG04301">
    <property type="taxonomic scope" value="Archaea"/>
</dbReference>
<dbReference type="HOGENOM" id="CLU_062816_1_0_2"/>
<dbReference type="OrthoDB" id="53087at2157"/>
<dbReference type="PhylomeDB" id="Q8TZZ2"/>
<dbReference type="UniPathway" id="UPA00065"/>
<dbReference type="Proteomes" id="UP000001013">
    <property type="component" value="Chromosome"/>
</dbReference>
<dbReference type="GO" id="GO:0003934">
    <property type="term" value="F:GTP cyclohydrolase I activity"/>
    <property type="evidence" value="ECO:0007669"/>
    <property type="project" value="InterPro"/>
</dbReference>
<dbReference type="GO" id="GO:0044682">
    <property type="term" value="F:GTP cyclohydrolase IV activity"/>
    <property type="evidence" value="ECO:0007669"/>
    <property type="project" value="UniProtKB-UniRule"/>
</dbReference>
<dbReference type="GO" id="GO:0005506">
    <property type="term" value="F:iron ion binding"/>
    <property type="evidence" value="ECO:0007669"/>
    <property type="project" value="UniProtKB-UniRule"/>
</dbReference>
<dbReference type="GO" id="GO:2001118">
    <property type="term" value="P:tetrahydromethanopterin biosynthetic process"/>
    <property type="evidence" value="ECO:0007669"/>
    <property type="project" value="UniProtKB-UniRule"/>
</dbReference>
<dbReference type="Gene3D" id="3.10.270.10">
    <property type="entry name" value="Urate Oxidase"/>
    <property type="match status" value="1"/>
</dbReference>
<dbReference type="HAMAP" id="MF_01527_A">
    <property type="entry name" value="GTP_cyclohydrol_A"/>
    <property type="match status" value="1"/>
</dbReference>
<dbReference type="InterPro" id="IPR003801">
    <property type="entry name" value="GTP_cyclohydrolase_FolE2/MptA"/>
</dbReference>
<dbReference type="InterPro" id="IPR022840">
    <property type="entry name" value="GTP_cyclohydrolase_MptA"/>
</dbReference>
<dbReference type="NCBIfam" id="NF010204">
    <property type="entry name" value="PRK13675.1-1"/>
    <property type="match status" value="1"/>
</dbReference>
<dbReference type="PANTHER" id="PTHR36445">
    <property type="entry name" value="GTP CYCLOHYDROLASE MPTA"/>
    <property type="match status" value="1"/>
</dbReference>
<dbReference type="PANTHER" id="PTHR36445:SF1">
    <property type="entry name" value="GTP CYCLOHYDROLASE MPTA"/>
    <property type="match status" value="1"/>
</dbReference>
<dbReference type="Pfam" id="PF02649">
    <property type="entry name" value="GCHY-1"/>
    <property type="match status" value="1"/>
</dbReference>
<evidence type="ECO:0000255" key="1">
    <source>
        <dbReference type="HAMAP-Rule" id="MF_01527"/>
    </source>
</evidence>